<proteinExistence type="inferred from homology"/>
<gene>
    <name evidence="1" type="primary">ppnP</name>
    <name type="ordered locus">Sde_1594</name>
</gene>
<dbReference type="EC" id="2.4.2.1" evidence="1"/>
<dbReference type="EC" id="2.4.2.2" evidence="1"/>
<dbReference type="EMBL" id="CP000282">
    <property type="protein sequence ID" value="ABD80856.1"/>
    <property type="molecule type" value="Genomic_DNA"/>
</dbReference>
<dbReference type="RefSeq" id="WP_011468076.1">
    <property type="nucleotide sequence ID" value="NC_007912.1"/>
</dbReference>
<dbReference type="SMR" id="Q21KC3"/>
<dbReference type="STRING" id="203122.Sde_1594"/>
<dbReference type="GeneID" id="98613271"/>
<dbReference type="KEGG" id="sde:Sde_1594"/>
<dbReference type="eggNOG" id="COG3123">
    <property type="taxonomic scope" value="Bacteria"/>
</dbReference>
<dbReference type="HOGENOM" id="CLU_157874_0_0_6"/>
<dbReference type="OrthoDB" id="9793848at2"/>
<dbReference type="Proteomes" id="UP000001947">
    <property type="component" value="Chromosome"/>
</dbReference>
<dbReference type="GO" id="GO:0005829">
    <property type="term" value="C:cytosol"/>
    <property type="evidence" value="ECO:0007669"/>
    <property type="project" value="TreeGrafter"/>
</dbReference>
<dbReference type="GO" id="GO:0047975">
    <property type="term" value="F:guanosine phosphorylase activity"/>
    <property type="evidence" value="ECO:0007669"/>
    <property type="project" value="UniProtKB-EC"/>
</dbReference>
<dbReference type="GO" id="GO:0004731">
    <property type="term" value="F:purine-nucleoside phosphorylase activity"/>
    <property type="evidence" value="ECO:0007669"/>
    <property type="project" value="UniProtKB-UniRule"/>
</dbReference>
<dbReference type="GO" id="GO:0009032">
    <property type="term" value="F:thymidine phosphorylase activity"/>
    <property type="evidence" value="ECO:0007669"/>
    <property type="project" value="UniProtKB-EC"/>
</dbReference>
<dbReference type="GO" id="GO:0004850">
    <property type="term" value="F:uridine phosphorylase activity"/>
    <property type="evidence" value="ECO:0007669"/>
    <property type="project" value="UniProtKB-EC"/>
</dbReference>
<dbReference type="CDD" id="cd20296">
    <property type="entry name" value="cupin_PpnP-like"/>
    <property type="match status" value="1"/>
</dbReference>
<dbReference type="FunFam" id="2.60.120.10:FF:000016">
    <property type="entry name" value="Pyrimidine/purine nucleoside phosphorylase"/>
    <property type="match status" value="1"/>
</dbReference>
<dbReference type="Gene3D" id="2.60.120.10">
    <property type="entry name" value="Jelly Rolls"/>
    <property type="match status" value="1"/>
</dbReference>
<dbReference type="HAMAP" id="MF_01537">
    <property type="entry name" value="Nucleos_phosphorylase_PpnP"/>
    <property type="match status" value="1"/>
</dbReference>
<dbReference type="InterPro" id="IPR009664">
    <property type="entry name" value="Ppnp"/>
</dbReference>
<dbReference type="InterPro" id="IPR014710">
    <property type="entry name" value="RmlC-like_jellyroll"/>
</dbReference>
<dbReference type="InterPro" id="IPR011051">
    <property type="entry name" value="RmlC_Cupin_sf"/>
</dbReference>
<dbReference type="PANTHER" id="PTHR36540">
    <property type="entry name" value="PYRIMIDINE/PURINE NUCLEOSIDE PHOSPHORYLASE"/>
    <property type="match status" value="1"/>
</dbReference>
<dbReference type="PANTHER" id="PTHR36540:SF1">
    <property type="entry name" value="PYRIMIDINE_PURINE NUCLEOSIDE PHOSPHORYLASE"/>
    <property type="match status" value="1"/>
</dbReference>
<dbReference type="Pfam" id="PF06865">
    <property type="entry name" value="Ppnp"/>
    <property type="match status" value="1"/>
</dbReference>
<dbReference type="SUPFAM" id="SSF51182">
    <property type="entry name" value="RmlC-like cupins"/>
    <property type="match status" value="1"/>
</dbReference>
<name>PPNP_SACD2</name>
<keyword id="KW-0328">Glycosyltransferase</keyword>
<keyword id="KW-1185">Reference proteome</keyword>
<keyword id="KW-0808">Transferase</keyword>
<accession>Q21KC3</accession>
<protein>
    <recommendedName>
        <fullName evidence="1">Pyrimidine/purine nucleoside phosphorylase</fullName>
        <ecNumber evidence="1">2.4.2.1</ecNumber>
        <ecNumber evidence="1">2.4.2.2</ecNumber>
    </recommendedName>
    <alternativeName>
        <fullName evidence="1">Adenosine phosphorylase</fullName>
    </alternativeName>
    <alternativeName>
        <fullName evidence="1">Cytidine phosphorylase</fullName>
    </alternativeName>
    <alternativeName>
        <fullName evidence="1">Guanosine phosphorylase</fullName>
    </alternativeName>
    <alternativeName>
        <fullName evidence="1">Inosine phosphorylase</fullName>
    </alternativeName>
    <alternativeName>
        <fullName evidence="1">Thymidine phosphorylase</fullName>
    </alternativeName>
    <alternativeName>
        <fullName evidence="1">Uridine phosphorylase</fullName>
    </alternativeName>
    <alternativeName>
        <fullName evidence="1">Xanthosine phosphorylase</fullName>
    </alternativeName>
</protein>
<evidence type="ECO:0000255" key="1">
    <source>
        <dbReference type="HAMAP-Rule" id="MF_01537"/>
    </source>
</evidence>
<organism>
    <name type="scientific">Saccharophagus degradans (strain 2-40 / ATCC 43961 / DSM 17024)</name>
    <dbReference type="NCBI Taxonomy" id="203122"/>
    <lineage>
        <taxon>Bacteria</taxon>
        <taxon>Pseudomonadati</taxon>
        <taxon>Pseudomonadota</taxon>
        <taxon>Gammaproteobacteria</taxon>
        <taxon>Cellvibrionales</taxon>
        <taxon>Cellvibrionaceae</taxon>
        <taxon>Saccharophagus</taxon>
    </lineage>
</organism>
<reference key="1">
    <citation type="journal article" date="2008" name="PLoS Genet.">
        <title>Complete genome sequence of the complex carbohydrate-degrading marine bacterium, Saccharophagus degradans strain 2-40 T.</title>
        <authorList>
            <person name="Weiner R.M."/>
            <person name="Taylor L.E. II"/>
            <person name="Henrissat B."/>
            <person name="Hauser L."/>
            <person name="Land M."/>
            <person name="Coutinho P.M."/>
            <person name="Rancurel C."/>
            <person name="Saunders E.H."/>
            <person name="Longmire A.G."/>
            <person name="Zhang H."/>
            <person name="Bayer E.A."/>
            <person name="Gilbert H.J."/>
            <person name="Larimer F."/>
            <person name="Zhulin I.B."/>
            <person name="Ekborg N.A."/>
            <person name="Lamed R."/>
            <person name="Richardson P.M."/>
            <person name="Borovok I."/>
            <person name="Hutcheson S."/>
        </authorList>
    </citation>
    <scope>NUCLEOTIDE SEQUENCE [LARGE SCALE GENOMIC DNA]</scope>
    <source>
        <strain>2-40 / ATCC 43961 / DSM 17024</strain>
    </source>
</reference>
<comment type="function">
    <text evidence="1">Catalyzes the phosphorolysis of diverse nucleosides, yielding D-ribose 1-phosphate and the respective free bases. Can use uridine, adenosine, guanosine, cytidine, thymidine, inosine and xanthosine as substrates. Also catalyzes the reverse reactions.</text>
</comment>
<comment type="catalytic activity">
    <reaction evidence="1">
        <text>a purine D-ribonucleoside + phosphate = a purine nucleobase + alpha-D-ribose 1-phosphate</text>
        <dbReference type="Rhea" id="RHEA:19805"/>
        <dbReference type="ChEBI" id="CHEBI:26386"/>
        <dbReference type="ChEBI" id="CHEBI:43474"/>
        <dbReference type="ChEBI" id="CHEBI:57720"/>
        <dbReference type="ChEBI" id="CHEBI:142355"/>
        <dbReference type="EC" id="2.4.2.1"/>
    </reaction>
</comment>
<comment type="catalytic activity">
    <reaction evidence="1">
        <text>adenosine + phosphate = alpha-D-ribose 1-phosphate + adenine</text>
        <dbReference type="Rhea" id="RHEA:27642"/>
        <dbReference type="ChEBI" id="CHEBI:16335"/>
        <dbReference type="ChEBI" id="CHEBI:16708"/>
        <dbReference type="ChEBI" id="CHEBI:43474"/>
        <dbReference type="ChEBI" id="CHEBI:57720"/>
        <dbReference type="EC" id="2.4.2.1"/>
    </reaction>
</comment>
<comment type="catalytic activity">
    <reaction evidence="1">
        <text>cytidine + phosphate = cytosine + alpha-D-ribose 1-phosphate</text>
        <dbReference type="Rhea" id="RHEA:52540"/>
        <dbReference type="ChEBI" id="CHEBI:16040"/>
        <dbReference type="ChEBI" id="CHEBI:17562"/>
        <dbReference type="ChEBI" id="CHEBI:43474"/>
        <dbReference type="ChEBI" id="CHEBI:57720"/>
        <dbReference type="EC" id="2.4.2.2"/>
    </reaction>
</comment>
<comment type="catalytic activity">
    <reaction evidence="1">
        <text>guanosine + phosphate = alpha-D-ribose 1-phosphate + guanine</text>
        <dbReference type="Rhea" id="RHEA:13233"/>
        <dbReference type="ChEBI" id="CHEBI:16235"/>
        <dbReference type="ChEBI" id="CHEBI:16750"/>
        <dbReference type="ChEBI" id="CHEBI:43474"/>
        <dbReference type="ChEBI" id="CHEBI:57720"/>
        <dbReference type="EC" id="2.4.2.1"/>
    </reaction>
</comment>
<comment type="catalytic activity">
    <reaction evidence="1">
        <text>inosine + phosphate = alpha-D-ribose 1-phosphate + hypoxanthine</text>
        <dbReference type="Rhea" id="RHEA:27646"/>
        <dbReference type="ChEBI" id="CHEBI:17368"/>
        <dbReference type="ChEBI" id="CHEBI:17596"/>
        <dbReference type="ChEBI" id="CHEBI:43474"/>
        <dbReference type="ChEBI" id="CHEBI:57720"/>
        <dbReference type="EC" id="2.4.2.1"/>
    </reaction>
</comment>
<comment type="catalytic activity">
    <reaction evidence="1">
        <text>thymidine + phosphate = 2-deoxy-alpha-D-ribose 1-phosphate + thymine</text>
        <dbReference type="Rhea" id="RHEA:16037"/>
        <dbReference type="ChEBI" id="CHEBI:17748"/>
        <dbReference type="ChEBI" id="CHEBI:17821"/>
        <dbReference type="ChEBI" id="CHEBI:43474"/>
        <dbReference type="ChEBI" id="CHEBI:57259"/>
        <dbReference type="EC" id="2.4.2.2"/>
    </reaction>
</comment>
<comment type="catalytic activity">
    <reaction evidence="1">
        <text>uridine + phosphate = alpha-D-ribose 1-phosphate + uracil</text>
        <dbReference type="Rhea" id="RHEA:24388"/>
        <dbReference type="ChEBI" id="CHEBI:16704"/>
        <dbReference type="ChEBI" id="CHEBI:17568"/>
        <dbReference type="ChEBI" id="CHEBI:43474"/>
        <dbReference type="ChEBI" id="CHEBI:57720"/>
        <dbReference type="EC" id="2.4.2.2"/>
    </reaction>
</comment>
<comment type="catalytic activity">
    <reaction evidence="1">
        <text>xanthosine + phosphate = alpha-D-ribose 1-phosphate + xanthine</text>
        <dbReference type="Rhea" id="RHEA:27638"/>
        <dbReference type="ChEBI" id="CHEBI:17712"/>
        <dbReference type="ChEBI" id="CHEBI:18107"/>
        <dbReference type="ChEBI" id="CHEBI:43474"/>
        <dbReference type="ChEBI" id="CHEBI:57720"/>
        <dbReference type="EC" id="2.4.2.1"/>
    </reaction>
</comment>
<comment type="similarity">
    <text evidence="1">Belongs to the nucleoside phosphorylase PpnP family.</text>
</comment>
<sequence length="94" mass="10539">MLEVNTYFDGTVKSIAFQTATLPATVGVMAKGEYTFGTDCKEIMTVVSGELIVQLPNQEEWQTFIDGQTFEVEANQSFNLKVPVETAYLCKYIR</sequence>
<feature type="chain" id="PRO_0000298721" description="Pyrimidine/purine nucleoside phosphorylase">
    <location>
        <begin position="1"/>
        <end position="94"/>
    </location>
</feature>